<gene>
    <name type="ordered locus">Mjls_5511</name>
</gene>
<accession>A3Q7Z7</accession>
<sequence length="380" mass="41966">MTGFRVGVGDGIPAARPAAETMTRANYLGAVANRVDSFWVPDHLNQLFPRSLWKQKYCGATKLIPRVDAVMEPWTMLGHIAARNRAGRLRLGVAVTDSGRRNPAVTAQAAATLHLLTRGRAILGIGPGEREGNEPYGVDWSKPVARFEEAMATIRALWDSGGELVNRDSPFFPLRKAIFDLPPYRGKWPEIWIAAHGPRMLRAAGRYADAYFPSFAHLPTEYAQRLDSVRSAASDVGRDPMAILPAVQMFVVTGSTRDDVDEALDSELLRAFGLNASDDVFTRHGGRHPMGAGFSGAQDLLPHDMDEQTALSHVAVIPPGVTREFLLNGTSDEVIQQAAQWRDCVRYMVLVNVSFLQRNLRKGLMSVKPFNKIVRELKKL</sequence>
<protein>
    <recommendedName>
        <fullName>Phthiodiolone/phenolphthiodiolone dimycocerosates ketoreductase</fullName>
        <ecNumber>1.2.-.-</ecNumber>
    </recommendedName>
</protein>
<feature type="chain" id="PRO_0000309351" description="Phthiodiolone/phenolphthiodiolone dimycocerosates ketoreductase">
    <location>
        <begin position="1"/>
        <end position="380"/>
    </location>
</feature>
<name>PHKR_MYCSJ</name>
<organism>
    <name type="scientific">Mycobacterium sp. (strain JLS)</name>
    <dbReference type="NCBI Taxonomy" id="164757"/>
    <lineage>
        <taxon>Bacteria</taxon>
        <taxon>Bacillati</taxon>
        <taxon>Actinomycetota</taxon>
        <taxon>Actinomycetes</taxon>
        <taxon>Mycobacteriales</taxon>
        <taxon>Mycobacteriaceae</taxon>
        <taxon>Mycobacterium</taxon>
    </lineage>
</organism>
<keyword id="KW-0444">Lipid biosynthesis</keyword>
<keyword id="KW-0443">Lipid metabolism</keyword>
<keyword id="KW-0560">Oxidoreductase</keyword>
<proteinExistence type="inferred from homology"/>
<comment type="function">
    <text evidence="1">Catalyzes the reduction of the keto moiety of phthiodiolone dimycocerosates (DIM B) and glycosylated phenolphthiodiolone dimycocerosates to form the intermediate compounds phthiotriol and glycosylated phenolphthiotriol dimycocerosates during phthiocerol dimycocerosates (DIM A) and glycosylated phenolphthiocerol dimycocerosates (PGL) biosynthesis.</text>
</comment>
<comment type="similarity">
    <text evidence="2">Belongs to the mer family. Phthiodiolone/phenolphthiodiolone dimycocerosates ketoreductase subfamily.</text>
</comment>
<reference key="1">
    <citation type="submission" date="2007-02" db="EMBL/GenBank/DDBJ databases">
        <title>Complete sequence of Mycobacterium sp. JLS.</title>
        <authorList>
            <consortium name="US DOE Joint Genome Institute"/>
            <person name="Copeland A."/>
            <person name="Lucas S."/>
            <person name="Lapidus A."/>
            <person name="Barry K."/>
            <person name="Detter J.C."/>
            <person name="Glavina del Rio T."/>
            <person name="Hammon N."/>
            <person name="Israni S."/>
            <person name="Dalin E."/>
            <person name="Tice H."/>
            <person name="Pitluck S."/>
            <person name="Chain P."/>
            <person name="Malfatti S."/>
            <person name="Shin M."/>
            <person name="Vergez L."/>
            <person name="Schmutz J."/>
            <person name="Larimer F."/>
            <person name="Land M."/>
            <person name="Hauser L."/>
            <person name="Kyrpides N."/>
            <person name="Mikhailova N."/>
            <person name="Miller C.D."/>
            <person name="Anderson A.J."/>
            <person name="Sims R.C."/>
            <person name="Richardson P."/>
        </authorList>
    </citation>
    <scope>NUCLEOTIDE SEQUENCE [LARGE SCALE GENOMIC DNA]</scope>
    <source>
        <strain>JLS</strain>
    </source>
</reference>
<dbReference type="EC" id="1.2.-.-"/>
<dbReference type="EMBL" id="CP000580">
    <property type="protein sequence ID" value="ABO01275.1"/>
    <property type="molecule type" value="Genomic_DNA"/>
</dbReference>
<dbReference type="SMR" id="A3Q7Z7"/>
<dbReference type="KEGG" id="mjl:Mjls_5511"/>
<dbReference type="HOGENOM" id="CLU_027853_5_3_11"/>
<dbReference type="BioCyc" id="MSP164757:G1G8C-5573-MONOMER"/>
<dbReference type="GO" id="GO:0016705">
    <property type="term" value="F:oxidoreductase activity, acting on paired donors, with incorporation or reduction of molecular oxygen"/>
    <property type="evidence" value="ECO:0007669"/>
    <property type="project" value="InterPro"/>
</dbReference>
<dbReference type="GO" id="GO:0006629">
    <property type="term" value="P:lipid metabolic process"/>
    <property type="evidence" value="ECO:0007669"/>
    <property type="project" value="UniProtKB-KW"/>
</dbReference>
<dbReference type="CDD" id="cd01097">
    <property type="entry name" value="Tetrahydromethanopterin_reductase"/>
    <property type="match status" value="1"/>
</dbReference>
<dbReference type="Gene3D" id="3.20.20.30">
    <property type="entry name" value="Luciferase-like domain"/>
    <property type="match status" value="1"/>
</dbReference>
<dbReference type="InterPro" id="IPR050564">
    <property type="entry name" value="F420-G6PD/mer"/>
</dbReference>
<dbReference type="InterPro" id="IPR011251">
    <property type="entry name" value="Luciferase-like_dom"/>
</dbReference>
<dbReference type="InterPro" id="IPR036661">
    <property type="entry name" value="Luciferase-like_sf"/>
</dbReference>
<dbReference type="PANTHER" id="PTHR43244">
    <property type="match status" value="1"/>
</dbReference>
<dbReference type="PANTHER" id="PTHR43244:SF1">
    <property type="entry name" value="5,10-METHYLENETETRAHYDROMETHANOPTERIN REDUCTASE"/>
    <property type="match status" value="1"/>
</dbReference>
<dbReference type="Pfam" id="PF00296">
    <property type="entry name" value="Bac_luciferase"/>
    <property type="match status" value="1"/>
</dbReference>
<dbReference type="SUPFAM" id="SSF51679">
    <property type="entry name" value="Bacterial luciferase-like"/>
    <property type="match status" value="1"/>
</dbReference>
<evidence type="ECO:0000250" key="1"/>
<evidence type="ECO:0000305" key="2"/>